<organism evidence="20">
    <name type="scientific">Caenorhabditis elegans</name>
    <dbReference type="NCBI Taxonomy" id="6239"/>
    <lineage>
        <taxon>Eukaryota</taxon>
        <taxon>Metazoa</taxon>
        <taxon>Ecdysozoa</taxon>
        <taxon>Nematoda</taxon>
        <taxon>Chromadorea</taxon>
        <taxon>Rhabditida</taxon>
        <taxon>Rhabditina</taxon>
        <taxon>Rhabditomorpha</taxon>
        <taxon>Rhabditoidea</taxon>
        <taxon>Rhabditidae</taxon>
        <taxon>Peloderinae</taxon>
        <taxon>Caenorhabditis</taxon>
    </lineage>
</organism>
<evidence type="ECO:0000250" key="1">
    <source>
        <dbReference type="UniProtKB" id="P61812"/>
    </source>
</evidence>
<evidence type="ECO:0000255" key="2"/>
<evidence type="ECO:0000255" key="3">
    <source>
        <dbReference type="PROSITE-ProRule" id="PRU00498"/>
    </source>
</evidence>
<evidence type="ECO:0000255" key="4">
    <source>
        <dbReference type="RuleBase" id="RU000354"/>
    </source>
</evidence>
<evidence type="ECO:0000256" key="5">
    <source>
        <dbReference type="SAM" id="MobiDB-lite"/>
    </source>
</evidence>
<evidence type="ECO:0000269" key="6">
    <source>
    </source>
</evidence>
<evidence type="ECO:0000269" key="7">
    <source>
    </source>
</evidence>
<evidence type="ECO:0000269" key="8">
    <source>
    </source>
</evidence>
<evidence type="ECO:0000269" key="9">
    <source>
    </source>
</evidence>
<evidence type="ECO:0000269" key="10">
    <source>
    </source>
</evidence>
<evidence type="ECO:0000269" key="11">
    <source>
    </source>
</evidence>
<evidence type="ECO:0000269" key="12">
    <source>
    </source>
</evidence>
<evidence type="ECO:0000269" key="13">
    <source>
    </source>
</evidence>
<evidence type="ECO:0000269" key="14">
    <source>
    </source>
</evidence>
<evidence type="ECO:0000303" key="15">
    <source>
    </source>
</evidence>
<evidence type="ECO:0000303" key="16">
    <source>
    </source>
</evidence>
<evidence type="ECO:0000305" key="17"/>
<evidence type="ECO:0000312" key="18">
    <source>
        <dbReference type="EMBL" id="AAC26791.1"/>
    </source>
</evidence>
<evidence type="ECO:0000312" key="19">
    <source>
        <dbReference type="EMBL" id="AAC27729.1"/>
    </source>
</evidence>
<evidence type="ECO:0000312" key="20">
    <source>
        <dbReference type="Proteomes" id="UP000001940"/>
    </source>
</evidence>
<evidence type="ECO:0000312" key="21">
    <source>
        <dbReference type="WormBase" id="T25F10.2"/>
    </source>
</evidence>
<proteinExistence type="evidence at protein level"/>
<gene>
    <name evidence="21" type="primary">dbl-1</name>
    <name evidence="15" type="synonym">cet-1</name>
    <name evidence="21" type="ORF">T25F10.2</name>
</gene>
<dbReference type="EMBL" id="AF074395">
    <property type="protein sequence ID" value="AAC26791.1"/>
    <property type="molecule type" value="mRNA"/>
</dbReference>
<dbReference type="EMBL" id="AF004395">
    <property type="protein sequence ID" value="AAC27729.1"/>
    <property type="molecule type" value="mRNA"/>
</dbReference>
<dbReference type="EMBL" id="BX284605">
    <property type="protein sequence ID" value="CCD74236.1"/>
    <property type="molecule type" value="Genomic_DNA"/>
</dbReference>
<dbReference type="PIR" id="T29518">
    <property type="entry name" value="T29518"/>
</dbReference>
<dbReference type="PIR" id="T43286">
    <property type="entry name" value="T43286"/>
</dbReference>
<dbReference type="RefSeq" id="NP_504709.1">
    <property type="nucleotide sequence ID" value="NM_072308.8"/>
</dbReference>
<dbReference type="SMR" id="G5EEL5"/>
<dbReference type="FunCoup" id="G5EEL5">
    <property type="interactions" value="101"/>
</dbReference>
<dbReference type="STRING" id="6239.T25F10.2.1"/>
<dbReference type="GlyCosmos" id="G5EEL5">
    <property type="glycosylation" value="4 sites, No reported glycans"/>
</dbReference>
<dbReference type="PaxDb" id="6239-T25F10.2.1"/>
<dbReference type="EnsemblMetazoa" id="T25F10.2.1">
    <property type="protein sequence ID" value="T25F10.2.1"/>
    <property type="gene ID" value="WBGene00000936"/>
</dbReference>
<dbReference type="GeneID" id="179068"/>
<dbReference type="KEGG" id="cel:CELE_T25F10.2"/>
<dbReference type="AGR" id="WB:WBGene00000936"/>
<dbReference type="CTD" id="179068"/>
<dbReference type="WormBase" id="T25F10.2">
    <property type="protein sequence ID" value="CE26386"/>
    <property type="gene ID" value="WBGene00000936"/>
    <property type="gene designation" value="dbl-1"/>
</dbReference>
<dbReference type="eggNOG" id="KOG3900">
    <property type="taxonomic scope" value="Eukaryota"/>
</dbReference>
<dbReference type="GeneTree" id="ENSGT00940000160223"/>
<dbReference type="HOGENOM" id="CLU_020515_3_0_1"/>
<dbReference type="InParanoid" id="G5EEL5"/>
<dbReference type="OMA" id="HQHKKHD"/>
<dbReference type="OrthoDB" id="5987191at2759"/>
<dbReference type="PhylomeDB" id="G5EEL5"/>
<dbReference type="Reactome" id="R-CEL-114608">
    <property type="pathway name" value="Platelet degranulation"/>
</dbReference>
<dbReference type="Reactome" id="R-CEL-201451">
    <property type="pathway name" value="Signaling by BMP"/>
</dbReference>
<dbReference type="Reactome" id="R-CEL-2129379">
    <property type="pathway name" value="Molecules associated with elastic fibres"/>
</dbReference>
<dbReference type="Reactome" id="R-CEL-2173788">
    <property type="pathway name" value="Downregulation of TGF-beta receptor signaling"/>
</dbReference>
<dbReference type="Reactome" id="R-CEL-2173789">
    <property type="pathway name" value="TGF-beta receptor signaling activates SMADs"/>
</dbReference>
<dbReference type="Reactome" id="R-CEL-2173791">
    <property type="pathway name" value="TGF-beta receptor signaling in EMT (epithelial to mesenchymal transition)"/>
</dbReference>
<dbReference type="Reactome" id="R-CEL-3000170">
    <property type="pathway name" value="Syndecan interactions"/>
</dbReference>
<dbReference type="Reactome" id="R-CEL-381426">
    <property type="pathway name" value="Regulation of Insulin-like Growth Factor (IGF) transport and uptake by Insulin-like Growth Factor Binding Proteins (IGFBPs)"/>
</dbReference>
<dbReference type="Reactome" id="R-CEL-8941855">
    <property type="pathway name" value="RUNX3 regulates CDKN1A transcription"/>
</dbReference>
<dbReference type="Reactome" id="R-CEL-8941858">
    <property type="pathway name" value="Regulation of RUNX3 expression and activity"/>
</dbReference>
<dbReference type="Reactome" id="R-CEL-8951936">
    <property type="pathway name" value="RUNX3 regulates p14-ARF"/>
</dbReference>
<dbReference type="Reactome" id="R-CEL-8957275">
    <property type="pathway name" value="Post-translational protein phosphorylation"/>
</dbReference>
<dbReference type="Reactome" id="R-CEL-9839389">
    <property type="pathway name" value="TGFBR3 regulates TGF-beta signaling"/>
</dbReference>
<dbReference type="SignaLink" id="G5EEL5"/>
<dbReference type="PRO" id="PR:G5EEL5"/>
<dbReference type="Proteomes" id="UP000001940">
    <property type="component" value="Chromosome V"/>
</dbReference>
<dbReference type="Bgee" id="WBGene00000936">
    <property type="expression patterns" value="Expressed in larva and 3 other cell types or tissues"/>
</dbReference>
<dbReference type="GO" id="GO:0005615">
    <property type="term" value="C:extracellular space"/>
    <property type="evidence" value="ECO:0000250"/>
    <property type="project" value="WormBase"/>
</dbReference>
<dbReference type="GO" id="GO:0070700">
    <property type="term" value="F:BMP receptor binding"/>
    <property type="evidence" value="ECO:0000250"/>
    <property type="project" value="WormBase"/>
</dbReference>
<dbReference type="GO" id="GO:0005125">
    <property type="term" value="F:cytokine activity"/>
    <property type="evidence" value="ECO:0000318"/>
    <property type="project" value="GO_Central"/>
</dbReference>
<dbReference type="GO" id="GO:0008083">
    <property type="term" value="F:growth factor activity"/>
    <property type="evidence" value="ECO:0007669"/>
    <property type="project" value="UniProtKB-KW"/>
</dbReference>
<dbReference type="GO" id="GO:0030509">
    <property type="term" value="P:BMP signaling pathway"/>
    <property type="evidence" value="ECO:0000250"/>
    <property type="project" value="WormBase"/>
</dbReference>
<dbReference type="GO" id="GO:0050832">
    <property type="term" value="P:defense response to fungus"/>
    <property type="evidence" value="ECO:0000315"/>
    <property type="project" value="WormBase"/>
</dbReference>
<dbReference type="GO" id="GO:0050829">
    <property type="term" value="P:defense response to Gram-negative bacterium"/>
    <property type="evidence" value="ECO:0000315"/>
    <property type="project" value="WormBase"/>
</dbReference>
<dbReference type="GO" id="GO:0050830">
    <property type="term" value="P:defense response to Gram-positive bacterium"/>
    <property type="evidence" value="ECO:0000315"/>
    <property type="project" value="WormBase"/>
</dbReference>
<dbReference type="GO" id="GO:0045087">
    <property type="term" value="P:innate immune response"/>
    <property type="evidence" value="ECO:0000315"/>
    <property type="project" value="WormBase"/>
</dbReference>
<dbReference type="GO" id="GO:0002119">
    <property type="term" value="P:nematode larval development"/>
    <property type="evidence" value="ECO:0000315"/>
    <property type="project" value="WormBase"/>
</dbReference>
<dbReference type="GO" id="GO:0045138">
    <property type="term" value="P:nematode male tail tip morphogenesis"/>
    <property type="evidence" value="ECO:0000315"/>
    <property type="project" value="WormBase"/>
</dbReference>
<dbReference type="GO" id="GO:0045793">
    <property type="term" value="P:positive regulation of cell size"/>
    <property type="evidence" value="ECO:0000315"/>
    <property type="project" value="WormBase"/>
</dbReference>
<dbReference type="GO" id="GO:0032877">
    <property type="term" value="P:positive regulation of DNA endoreduplication"/>
    <property type="evidence" value="ECO:0000315"/>
    <property type="project" value="WormBase"/>
</dbReference>
<dbReference type="GO" id="GO:0010628">
    <property type="term" value="P:positive regulation of gene expression"/>
    <property type="evidence" value="ECO:0000315"/>
    <property type="project" value="UniProtKB"/>
</dbReference>
<dbReference type="GO" id="GO:0040018">
    <property type="term" value="P:positive regulation of multicellular organism growth"/>
    <property type="evidence" value="ECO:0000315"/>
    <property type="project" value="WormBase"/>
</dbReference>
<dbReference type="GO" id="GO:0046622">
    <property type="term" value="P:positive regulation of organ growth"/>
    <property type="evidence" value="ECO:0000315"/>
    <property type="project" value="WormBase"/>
</dbReference>
<dbReference type="GO" id="GO:0045944">
    <property type="term" value="P:positive regulation of transcription by RNA polymerase II"/>
    <property type="evidence" value="ECO:0000315"/>
    <property type="project" value="WormBase"/>
</dbReference>
<dbReference type="GO" id="GO:0030511">
    <property type="term" value="P:positive regulation of transforming growth factor beta receptor signaling pathway"/>
    <property type="evidence" value="ECO:0000316"/>
    <property type="project" value="UniProtKB"/>
</dbReference>
<dbReference type="GO" id="GO:0022604">
    <property type="term" value="P:regulation of cell morphogenesis"/>
    <property type="evidence" value="ECO:0000315"/>
    <property type="project" value="WormBase"/>
</dbReference>
<dbReference type="GO" id="GO:0010468">
    <property type="term" value="P:regulation of gene expression"/>
    <property type="evidence" value="ECO:0000315"/>
    <property type="project" value="UniProtKB"/>
</dbReference>
<dbReference type="GO" id="GO:0019216">
    <property type="term" value="P:regulation of lipid metabolic process"/>
    <property type="evidence" value="ECO:0000315"/>
    <property type="project" value="UniProtKB"/>
</dbReference>
<dbReference type="GO" id="GO:0042661">
    <property type="term" value="P:regulation of mesodermal cell fate specification"/>
    <property type="evidence" value="ECO:0000316"/>
    <property type="project" value="UniProtKB"/>
</dbReference>
<dbReference type="CDD" id="cd13761">
    <property type="entry name" value="TGF_beta_BMP5_like"/>
    <property type="match status" value="1"/>
</dbReference>
<dbReference type="FunFam" id="2.10.90.10:FF:000001">
    <property type="entry name" value="Bone morphogenetic protein 4"/>
    <property type="match status" value="1"/>
</dbReference>
<dbReference type="FunFam" id="2.60.120.970:FF:000045">
    <property type="entry name" value="CET-1"/>
    <property type="match status" value="1"/>
</dbReference>
<dbReference type="Gene3D" id="2.60.120.970">
    <property type="match status" value="1"/>
</dbReference>
<dbReference type="Gene3D" id="2.10.90.10">
    <property type="entry name" value="Cystine-knot cytokines"/>
    <property type="match status" value="1"/>
</dbReference>
<dbReference type="InterPro" id="IPR029034">
    <property type="entry name" value="Cystine-knot_cytokine"/>
</dbReference>
<dbReference type="InterPro" id="IPR001839">
    <property type="entry name" value="TGF-b_C"/>
</dbReference>
<dbReference type="InterPro" id="IPR015615">
    <property type="entry name" value="TGF-beta-rel"/>
</dbReference>
<dbReference type="InterPro" id="IPR017948">
    <property type="entry name" value="TGFb_CS"/>
</dbReference>
<dbReference type="PANTHER" id="PTHR11848:SF310">
    <property type="entry name" value="PROTEIN 60A-RELATED"/>
    <property type="match status" value="1"/>
</dbReference>
<dbReference type="PANTHER" id="PTHR11848">
    <property type="entry name" value="TGF-BETA FAMILY"/>
    <property type="match status" value="1"/>
</dbReference>
<dbReference type="Pfam" id="PF00019">
    <property type="entry name" value="TGF_beta"/>
    <property type="match status" value="1"/>
</dbReference>
<dbReference type="SMART" id="SM00204">
    <property type="entry name" value="TGFB"/>
    <property type="match status" value="1"/>
</dbReference>
<dbReference type="SUPFAM" id="SSF57501">
    <property type="entry name" value="Cystine-knot cytokines"/>
    <property type="match status" value="1"/>
</dbReference>
<dbReference type="PROSITE" id="PS00250">
    <property type="entry name" value="TGF_BETA_1"/>
    <property type="match status" value="1"/>
</dbReference>
<dbReference type="PROSITE" id="PS51362">
    <property type="entry name" value="TGF_BETA_2"/>
    <property type="match status" value="1"/>
</dbReference>
<protein>
    <recommendedName>
        <fullName evidence="17">Protein dbl-1</fullName>
    </recommendedName>
    <alternativeName>
        <fullName evidence="16">Dpp and BMP-like protein 1</fullName>
    </alternativeName>
</protein>
<name>DBL1_CAEEL</name>
<keyword id="KW-0217">Developmental protein</keyword>
<keyword id="KW-1015">Disulfide bond</keyword>
<keyword id="KW-0325">Glycoprotein</keyword>
<keyword id="KW-0339">Growth factor</keyword>
<keyword id="KW-1185">Reference proteome</keyword>
<keyword id="KW-0964">Secreted</keyword>
<keyword id="KW-0732">Signal</keyword>
<accession>G5EEL5</accession>
<accession>O76514</accession>
<reference evidence="19" key="1">
    <citation type="journal article" date="1999" name="Development">
        <title>A BMP homolog acts as a dose-dependent regulator of body size and male tail patterning in Caenorhabditis elegans.</title>
        <authorList>
            <person name="Suzuki Y."/>
            <person name="Yandell M.D."/>
            <person name="Roy P.J."/>
            <person name="Krishna S."/>
            <person name="Savage-Dunn C."/>
            <person name="Ross R.M."/>
            <person name="Padgett R.W."/>
            <person name="Wood W.B."/>
        </authorList>
    </citation>
    <scope>NUCLEOTIDE SEQUENCE [MRNA]</scope>
    <scope>FUNCTION</scope>
    <scope>DEVELOPMENTAL STAGE</scope>
    <scope>MUTAGENESIS OF 314-GLN--ARG-365</scope>
    <source>
        <strain evidence="19">Bristol N2</strain>
    </source>
</reference>
<reference evidence="18" key="2">
    <citation type="journal article" date="1999" name="Development">
        <title>Regulation of body length and male tail ray pattern formation of Caenorhabditis elegans by a member of TGF-beta family.</title>
        <authorList>
            <person name="Morita K."/>
            <person name="Chow K.L."/>
            <person name="Ueno N."/>
        </authorList>
    </citation>
    <scope>NUCLEOTIDE SEQUENCE [MRNA]</scope>
    <scope>FUNCTION</scope>
    <scope>DEVELOPMENTAL STAGE</scope>
    <scope>DISRUPTION PHENOTYPE</scope>
    <source>
        <strain evidence="18">Bristol N2</strain>
    </source>
</reference>
<reference evidence="20" key="3">
    <citation type="journal article" date="1998" name="Science">
        <title>Genome sequence of the nematode C. elegans: a platform for investigating biology.</title>
        <authorList>
            <consortium name="The C. elegans sequencing consortium"/>
        </authorList>
    </citation>
    <scope>NUCLEOTIDE SEQUENCE [LARGE SCALE GENOMIC DNA]</scope>
    <source>
        <strain evidence="20">Bristol N2</strain>
    </source>
</reference>
<reference evidence="17" key="4">
    <citation type="journal article" date="2002" name="Curr. Biol.">
        <title>Inducible antibacterial defense system in C. elegans.</title>
        <authorList>
            <person name="Mallo G.V."/>
            <person name="Kurz C.L."/>
            <person name="Couillault C."/>
            <person name="Pujol N."/>
            <person name="Granjeaud S."/>
            <person name="Kohara Y."/>
            <person name="Ewbank J.J."/>
        </authorList>
    </citation>
    <scope>FUNCTION</scope>
</reference>
<reference key="5">
    <citation type="journal article" date="2008" name="Biochem. Biophys. Res. Commun.">
        <title>Regulation of rnt-1 expression mediated by the opposing effects of BRO-1 and DBL-1 in the nematode Caenorhabditis elegans.</title>
        <authorList>
            <person name="Shim J."/>
            <person name="Lee J."/>
        </authorList>
    </citation>
    <scope>FUNCTION</scope>
    <scope>MUTAGENESIS OF 314-GLN--ARG-365</scope>
</reference>
<reference evidence="17" key="6">
    <citation type="journal article" date="2011" name="Genet. Res.">
        <title>Non-stringent tissue-source requirements for BMP ligand expression in regulation of body size in Caenorhabditis elegans.</title>
        <authorList>
            <person name="Savage-Dunn C."/>
            <person name="Yu L."/>
            <person name="Gill K."/>
            <person name="Awan M."/>
            <person name="Fernando T."/>
        </authorList>
    </citation>
    <scope>FUNCTION</scope>
</reference>
<reference evidence="17" key="7">
    <citation type="journal article" date="2012" name="Proc. Natl. Acad. Sci. U.S.A.">
        <title>DBL-1, a TGF-beta, is essential for Caenorhabditis elegans aversive olfactory learning.</title>
        <authorList>
            <person name="Zhang X."/>
            <person name="Zhang Y."/>
        </authorList>
    </citation>
    <scope>FUNCTION</scope>
    <scope>TISSUE SPECIFICITY</scope>
    <scope>DISRUPTION PHENOTYPE</scope>
    <scope>MUTAGENESIS OF 314-GLN--ARG-365</scope>
</reference>
<reference evidence="17" key="8">
    <citation type="journal article" date="2013" name="Development">
        <title>The neogenin/DCC homolog UNC-40 promotes BMP signaling via the RGM protein DRAG-1 in C. elegans.</title>
        <authorList>
            <person name="Tian C."/>
            <person name="Shi H."/>
            <person name="Xiong S."/>
            <person name="Hu F."/>
            <person name="Xiong W.C."/>
            <person name="Liu J."/>
        </authorList>
    </citation>
    <scope>FUNCTION</scope>
    <scope>INTERACTION WITH DRAG-1</scope>
    <scope>MUTAGENESIS OF 314-GLN--ARG-365</scope>
</reference>
<reference evidence="17" key="9">
    <citation type="journal article" date="2014" name="Dev. Biol.">
        <title>CEH-28 activates dbl-1 expression and TGF-beta signaling in the C. elegans M4 neuron.</title>
        <authorList>
            <person name="Ramakrishnan K."/>
            <person name="Ray P."/>
            <person name="Okkema P.G."/>
        </authorList>
    </citation>
    <scope>FUNCTION</scope>
</reference>
<reference evidence="17" key="10">
    <citation type="journal article" date="2018" name="G3 (Bethesda)">
        <title>Caenorhabditis elegans DBL-1/BMP Regulates Lipid Accumulation via Interaction with Insulin Signaling.</title>
        <authorList>
            <person name="Clark J.F."/>
            <person name="Meade M."/>
            <person name="Ranepura G."/>
            <person name="Hall D.H."/>
            <person name="Savage-Dunn C."/>
        </authorList>
    </citation>
    <scope>FUNCTION</scope>
    <scope>MUTAGENESIS OF 314-GLN--ARG-365</scope>
</reference>
<comment type="function">
    <text evidence="6 7 8 9 10 11 12 13 14">Ligand for the serine/threonine-protein kinase receptor type-1 sma-6 which activates a TGF-beta-like signaling pathway (PubMed:24004951). Multifunctional protein that is involved in body size, male ectodermal patterning, innate immunity, lipid metabolism and neural plasticity (PubMed:10021351, PubMed:12176330, PubMed:23019581, PubMed:29162682, PubMed:9847238). Dose-dependent regulator of body size, probably influencing the sizes of some or all cells rather than their number (PubMed:10021351, PubMed:22189608, PubMed:9847238). Plays a role in patterning of male-specific genital sensilla (simple sense organs), known as rays, and mating-associated structures, spicules (PubMed:10021351, PubMed:9847238). Plays a protective role in response to infection by the Gram-negative bacterium S.marcescens, by activating expression of genes involved in innate immunity (PubMed:12176330). Regulator of lipid homeostasis, acting non cell-autonomously in the hypodermis; partly dependent on the Insulin/IGF-1-like signaling (IIS) mediated pathway (PubMed:29162682). Required for aversive olfactory learning of pathogenic bacteria in adults (PubMed:23019581). Involved in gland cell morphology, possibly via activation of a Smad-independent TGF-beta signaling pathway (PubMed:24690231). Required to oppose the autoregulation of expression of Runt-related transcription factor rnt-1.</text>
</comment>
<comment type="subunit">
    <text evidence="1 11">Homodimer; disulfide-linked (By similarity). Interacts with drag-1 (PubMed:24004951).</text>
</comment>
<comment type="subcellular location">
    <subcellularLocation>
        <location evidence="17">Secreted</location>
    </subcellularLocation>
</comment>
<comment type="tissue specificity">
    <text evidence="10 14">Expressed in embryos just prior to hatching and remains constant in most cells throughout the larval and adult stages (PubMed:9847238). Expressed by AVA command interneurons (PubMed:23019581).</text>
</comment>
<comment type="developmental stage">
    <text evidence="6 14">Expressed in L4 larval stage primarily in neurons, including ventral cord neurons DA, DB, VA and VB; the lateral excretory canal associated CAN cells; and anterior neurons AVK, DVA, I5, M1, M2, M4 and M5.</text>
</comment>
<comment type="disruption phenotype">
    <text evidence="6 10">Reduced body size (PubMed:10021351). Abnormalities in the male tail (PubMed:10021351). Disrupted aversive learning (PubMed:23019581).</text>
</comment>
<comment type="similarity">
    <text evidence="4">Belongs to the TGF-beta family.</text>
</comment>
<sequence length="365" mass="41769">MNDSVRTTTTISSTKSLVHSFQLSAILHLFLLISFTPMSAAADQHASHATRRGLLRKLGLEHVPVQTGPSIDVPQHMWDIYDDDNDVDWVRHYYPKEIIEDNEGFLLSYNLSLAARNAHNEEVTKATLKLRLRRNNKARRSGNISIYFFEDDINNDRFQIESRSVDNLTEWIDFDVTAAFLRRTNRISFFIDLPEDVEIEETQSSSLSSLPYARAQSAPLIVFSDLSEPSSVRRKRSAQTGNSERKNRKKGRKHHNTEAESNLCRRTDFYVDFDDLNWQDWIMAPKGYDAYQCQGSCPNPMPAQLNATNHAIIQSLLHSLRPDEVPPPCCVPTETSPLSILYMDVDKVIVIREYADMRVESCGCR</sequence>
<feature type="signal peptide" evidence="2">
    <location>
        <begin position="1"/>
        <end position="42"/>
    </location>
</feature>
<feature type="propeptide" id="PRO_0000452181" evidence="2">
    <location>
        <begin position="43"/>
        <end position="244"/>
    </location>
</feature>
<feature type="chain" id="PRO_0000452182" description="Protein dbl-1" evidence="2">
    <location>
        <begin position="245"/>
        <end position="365"/>
    </location>
</feature>
<feature type="region of interest" description="Disordered" evidence="5">
    <location>
        <begin position="231"/>
        <end position="259"/>
    </location>
</feature>
<feature type="compositionally biased region" description="Basic residues" evidence="5">
    <location>
        <begin position="246"/>
        <end position="255"/>
    </location>
</feature>
<feature type="glycosylation site" description="N-linked (GlcNAc...) asparagine" evidence="3">
    <location>
        <position position="110"/>
    </location>
</feature>
<feature type="glycosylation site" description="N-linked (GlcNAc...) asparagine" evidence="3">
    <location>
        <position position="143"/>
    </location>
</feature>
<feature type="glycosylation site" description="N-linked (GlcNAc...) asparagine" evidence="3">
    <location>
        <position position="167"/>
    </location>
</feature>
<feature type="glycosylation site" description="N-linked (GlcNAc...) asparagine" evidence="3">
    <location>
        <position position="306"/>
    </location>
</feature>
<feature type="disulfide bond" evidence="1">
    <location>
        <begin position="264"/>
        <end position="330"/>
    </location>
</feature>
<feature type="disulfide bond" evidence="1">
    <location>
        <begin position="293"/>
        <end position="362"/>
    </location>
</feature>
<feature type="disulfide bond" evidence="1">
    <location>
        <begin position="297"/>
        <end position="364"/>
    </location>
</feature>
<feature type="disulfide bond" description="Interchain" evidence="1">
    <location>
        <position position="329"/>
    </location>
</feature>
<feature type="mutagenesis site" description="In wk70; reduced body size in hermaphrodites, probably due to abnormal postembryonic growth, but without embryonic or larval lethality. Fusions of male-specific genital sensilla (simple sense organs) known as rays. Decrease in lipid levels at the L4 larval stage. Disrupted aversive learning. Expression of Runt-related transcription factor rnt-1 is abolished, when combined with RNAi-mediated knockdown of CBF beta homolog bro-1. Hatched larvae show considerably lower expression of rnt-1, but normal levels in embryos." evidence="8 10 11 13 14">
    <location>
        <begin position="314"/>
        <end position="365"/>
    </location>
</feature>
<feature type="sequence conflict" description="In Ref. 2; AAC26791." evidence="17" ref="2">
    <original>I</original>
    <variation>T</variation>
    <location>
        <position position="199"/>
    </location>
</feature>
<feature type="sequence conflict" description="In Ref. 2; AAC26791." evidence="17" ref="2">
    <original>YARA</original>
    <variation>TRGS</variation>
    <location>
        <begin position="212"/>
        <end position="215"/>
    </location>
</feature>
<feature type="sequence conflict" description="In Ref. 2; AAC26791." evidence="17" ref="2">
    <original>A</original>
    <variation>R</variation>
    <location>
        <position position="238"/>
    </location>
</feature>